<sequence length="356" mass="37914">MNFEFEREIGFINSQPSLAECLTSFPAVLETFQTSSIKESTLIPPPPPFEQTFPSLQPGASTLQRPRSQKRAEDGPALPPPPPPPLPAAPPAPEFPWMKEKKSAKKPSQSATSPSPAASAVPASGVGSPADGLGLPEAGGGGARRLRTAYTNTQLLELEKEFHFNKYLCRPRRVEIAALLDLTERQVKVWFQNRRMKHKRQTQHREPPDGEPACPGALEDICDPAEEPAASPGGPSASRAAWEACCHPPEVVPGALSADPRPLAVRLEGAGASSPGCALRGAGGLEPGPLPEDVFSGRQDSPFLPDLNFFAADSCLQLSGGLSPSLQGSLDSPVPFSEEELDFFTSTLCAIDLQFP</sequence>
<name>HXB2_HUMAN</name>
<comment type="function">
    <text evidence="3">Sequence-specific transcription factor which is part of a developmental regulatory system that provides cells with specific positional identities on the anterior-posterior axis.</text>
</comment>
<comment type="subunit">
    <text evidence="3">Part of the nuclear protein complex gamma-globin promoter and enhancer binding factor (gamma-PE) composed at least by SATB1 and HOXB2.</text>
</comment>
<comment type="interaction">
    <interactant intactId="EBI-5329558">
        <id>P14652</id>
    </interactant>
    <interactant intactId="EBI-740376">
        <id>Q86UW9</id>
        <label>DTX2</label>
    </interactant>
    <organismsDiffer>false</organismsDiffer>
    <experiments>3</experiments>
</comment>
<comment type="interaction">
    <interactant intactId="EBI-5329558">
        <id>P14652</id>
    </interactant>
    <interactant intactId="EBI-10172526">
        <id>Q9UJV3-2</id>
        <label>MID2</label>
    </interactant>
    <organismsDiffer>false</organismsDiffer>
    <experiments>3</experiments>
</comment>
<comment type="interaction">
    <interactant intactId="EBI-5329558">
        <id>P14652</id>
    </interactant>
    <interactant intactId="EBI-9675802">
        <id>Q6PF18</id>
        <label>MORN3</label>
    </interactant>
    <organismsDiffer>false</organismsDiffer>
    <experiments>3</experiments>
</comment>
<comment type="interaction">
    <interactant intactId="EBI-5329558">
        <id>P14652</id>
    </interactant>
    <interactant intactId="EBI-10249760">
        <id>Q9UHB4</id>
        <label>NDOR1</label>
    </interactant>
    <organismsDiffer>false</organismsDiffer>
    <experiments>3</experiments>
</comment>
<comment type="interaction">
    <interactant intactId="EBI-5329558">
        <id>P14652</id>
    </interactant>
    <interactant intactId="EBI-10302990">
        <id>Q9BYU1</id>
        <label>PBX4</label>
    </interactant>
    <organismsDiffer>false</organismsDiffer>
    <experiments>3</experiments>
</comment>
<comment type="interaction">
    <interactant intactId="EBI-5329558">
        <id>P14652</id>
    </interactant>
    <interactant intactId="EBI-11984663">
        <id>Q06455-2</id>
        <label>RUNX1T1</label>
    </interactant>
    <organismsDiffer>false</organismsDiffer>
    <experiments>3</experiments>
</comment>
<comment type="interaction">
    <interactant intactId="EBI-5329558">
        <id>P14652</id>
    </interactant>
    <interactant intactId="EBI-4398527">
        <id>Q9H2K2</id>
        <label>TNKS2</label>
    </interactant>
    <organismsDiffer>false</organismsDiffer>
    <experiments>3</experiments>
</comment>
<comment type="interaction">
    <interactant intactId="EBI-5329558">
        <id>P14652</id>
    </interactant>
    <interactant intactId="EBI-1380492">
        <id>Q8TF42</id>
        <label>UBASH3B</label>
    </interactant>
    <organismsDiffer>false</organismsDiffer>
    <experiments>3</experiments>
</comment>
<comment type="interaction">
    <interactant intactId="EBI-5329558">
        <id>P14652</id>
    </interactant>
    <interactant intactId="EBI-11741890">
        <id>Q86VK4-3</id>
        <label>ZNF410</label>
    </interactant>
    <organismsDiffer>false</organismsDiffer>
    <experiments>3</experiments>
</comment>
<comment type="subcellular location">
    <subcellularLocation>
        <location>Nucleus</location>
    </subcellularLocation>
</comment>
<comment type="developmental stage">
    <text>Expressed in whole embryos and fetuses at 5-9 weeks from conception.</text>
</comment>
<comment type="similarity">
    <text evidence="4">Belongs to the Antp homeobox family. Proboscipedia subfamily.</text>
</comment>
<organism>
    <name type="scientific">Homo sapiens</name>
    <name type="common">Human</name>
    <dbReference type="NCBI Taxonomy" id="9606"/>
    <lineage>
        <taxon>Eukaryota</taxon>
        <taxon>Metazoa</taxon>
        <taxon>Chordata</taxon>
        <taxon>Craniata</taxon>
        <taxon>Vertebrata</taxon>
        <taxon>Euteleostomi</taxon>
        <taxon>Mammalia</taxon>
        <taxon>Eutheria</taxon>
        <taxon>Euarchontoglires</taxon>
        <taxon>Primates</taxon>
        <taxon>Haplorrhini</taxon>
        <taxon>Catarrhini</taxon>
        <taxon>Hominidae</taxon>
        <taxon>Homo</taxon>
    </lineage>
</organism>
<feature type="chain" id="PRO_0000200114" description="Homeobox protein Hox-B2">
    <location>
        <begin position="1"/>
        <end position="356"/>
    </location>
</feature>
<feature type="DNA-binding region" description="Homeobox" evidence="1">
    <location>
        <begin position="143"/>
        <end position="202"/>
    </location>
</feature>
<feature type="region of interest" description="Disordered" evidence="2">
    <location>
        <begin position="39"/>
        <end position="142"/>
    </location>
</feature>
<feature type="region of interest" description="Disordered" evidence="2">
    <location>
        <begin position="197"/>
        <end position="240"/>
    </location>
</feature>
<feature type="short sequence motif" description="Antp-type hexapeptide">
    <location>
        <begin position="94"/>
        <end position="99"/>
    </location>
</feature>
<feature type="compositionally biased region" description="Polar residues" evidence="2">
    <location>
        <begin position="52"/>
        <end position="66"/>
    </location>
</feature>
<feature type="compositionally biased region" description="Pro residues" evidence="2">
    <location>
        <begin position="77"/>
        <end position="94"/>
    </location>
</feature>
<feature type="compositionally biased region" description="Low complexity" evidence="2">
    <location>
        <begin position="106"/>
        <end position="136"/>
    </location>
</feature>
<feature type="compositionally biased region" description="Low complexity" evidence="2">
    <location>
        <begin position="227"/>
        <end position="240"/>
    </location>
</feature>
<feature type="modified residue" description="Phosphoserine" evidence="5">
    <location>
        <position position="274"/>
    </location>
</feature>
<feature type="sequence conflict" description="In Ref. 3; CAA34298." evidence="4" ref="3">
    <original>PEA</original>
    <variation>RRL</variation>
    <location>
        <begin position="136"/>
        <end position="138"/>
    </location>
</feature>
<keyword id="KW-0217">Developmental protein</keyword>
<keyword id="KW-0238">DNA-binding</keyword>
<keyword id="KW-0371">Homeobox</keyword>
<keyword id="KW-0539">Nucleus</keyword>
<keyword id="KW-0597">Phosphoprotein</keyword>
<keyword id="KW-1267">Proteomics identification</keyword>
<keyword id="KW-1185">Reference proteome</keyword>
<keyword id="KW-0804">Transcription</keyword>
<keyword id="KW-0805">Transcription regulation</keyword>
<protein>
    <recommendedName>
        <fullName>Homeobox protein Hox-B2</fullName>
    </recommendedName>
    <alternativeName>
        <fullName>Homeobox protein Hox-2.8</fullName>
    </alternativeName>
    <alternativeName>
        <fullName>Homeobox protein Hox-2H</fullName>
    </alternativeName>
    <alternativeName>
        <fullName>K8</fullName>
    </alternativeName>
</protein>
<reference key="1">
    <citation type="journal article" date="1989" name="Nucleic Acids Res.">
        <title>The human HOX gene family.</title>
        <authorList>
            <person name="Acampora D."/>
            <person name="D'Esposito M."/>
            <person name="Faiella A."/>
            <person name="Pannese M."/>
            <person name="Migliaccio E."/>
            <person name="Morelli F."/>
            <person name="Stornaiuolo A."/>
            <person name="Nigro V."/>
            <person name="Simeone A."/>
            <person name="Boncinelli E."/>
        </authorList>
    </citation>
    <scope>NUCLEOTIDE SEQUENCE [MRNA]</scope>
</reference>
<reference key="2">
    <citation type="journal article" date="2004" name="Genome Res.">
        <title>The status, quality, and expansion of the NIH full-length cDNA project: the Mammalian Gene Collection (MGC).</title>
        <authorList>
            <consortium name="The MGC Project Team"/>
        </authorList>
    </citation>
    <scope>NUCLEOTIDE SEQUENCE [LARGE SCALE MRNA]</scope>
</reference>
<reference key="3">
    <citation type="journal article" date="1989" name="Differentiation">
        <title>Differential expression of human HOX-2 genes along the anterior-posterior axis in embryonic central nervous system.</title>
        <authorList>
            <person name="Giampaolo A."/>
            <person name="Acampora D."/>
            <person name="Zappavigna V."/>
            <person name="Pannese M."/>
            <person name="D'Esposito M."/>
            <person name="Care A."/>
            <person name="Faiella A."/>
            <person name="Stornaiuolo A."/>
            <person name="Russo G."/>
            <person name="Simeone A."/>
            <person name="Boncinelli E."/>
            <person name="Peschle C."/>
        </authorList>
    </citation>
    <scope>NUCLEOTIDE SEQUENCE [GENOMIC DNA] OF 132-208</scope>
    <source>
        <tissue>Placenta</tissue>
    </source>
</reference>
<reference key="4">
    <citation type="journal article" date="1989" name="Genome">
        <title>Organization of human class I homeobox genes.</title>
        <authorList>
            <person name="Boncinelli E."/>
            <person name="Acampora D."/>
            <person name="Pannese M."/>
            <person name="D'Esposito M."/>
            <person name="Somma R."/>
            <person name="Gaudino G."/>
            <person name="Stornaiuolo A."/>
            <person name="Cafiero M."/>
            <person name="Faiella A."/>
            <person name="Simeone A."/>
        </authorList>
    </citation>
    <scope>NUCLEOTIDE SEQUENCE [GENOMIC DNA] OF 143-208</scope>
</reference>
<reference key="5">
    <citation type="journal article" date="1988" name="EMBO J.">
        <title>Expression of multiple homeobox genes within diverse mammalian haemopoietic lineages.</title>
        <authorList>
            <person name="Kongsuwan K."/>
            <person name="Webb E."/>
            <person name="Housiaux P."/>
            <person name="Adams J.M."/>
        </authorList>
    </citation>
    <scope>NUCLEOTIDE SEQUENCE OF 143-202</scope>
</reference>
<reference key="6">
    <citation type="journal article" date="1995" name="J. Biol. Chem.">
        <title>Transcription factor GATA-1 regulates human HOXB2 gene expression in erythroid cells.</title>
        <authorList>
            <person name="Vieille-Grosjean I."/>
            <person name="Huber P."/>
        </authorList>
    </citation>
    <scope>NUCLEOTIDE SEQUENCE [GENOMIC DNA] OF 1-42</scope>
</reference>
<reference key="7">
    <citation type="journal article" date="1999" name="DNA Cell Biol.">
        <title>The gammaPE complex contains both SATB1 and HOXB2 and has positive and negative roles in human gamma-globin gene regulation.</title>
        <authorList>
            <person name="Case S.S."/>
            <person name="Huber P."/>
            <person name="Lloyd J.A."/>
        </authorList>
    </citation>
    <scope>FUNCTION</scope>
    <scope>GAMMA-GLOBIN PROMOTER AND ENHANCER BINDING FACTOR COMPLEX</scope>
</reference>
<reference key="8">
    <citation type="journal article" date="2013" name="J. Proteome Res.">
        <title>Toward a comprehensive characterization of a human cancer cell phosphoproteome.</title>
        <authorList>
            <person name="Zhou H."/>
            <person name="Di Palma S."/>
            <person name="Preisinger C."/>
            <person name="Peng M."/>
            <person name="Polat A.N."/>
            <person name="Heck A.J."/>
            <person name="Mohammed S."/>
        </authorList>
    </citation>
    <scope>PHOSPHORYLATION [LARGE SCALE ANALYSIS] AT SER-274</scope>
    <scope>IDENTIFICATION BY MASS SPECTROMETRY [LARGE SCALE ANALYSIS]</scope>
    <source>
        <tissue>Erythroleukemia</tissue>
    </source>
</reference>
<dbReference type="EMBL" id="X16665">
    <property type="protein sequence ID" value="CAA34655.1"/>
    <property type="molecule type" value="mRNA"/>
</dbReference>
<dbReference type="EMBL" id="BC074805">
    <property type="protein sequence ID" value="AAH74805.1"/>
    <property type="molecule type" value="mRNA"/>
</dbReference>
<dbReference type="EMBL" id="BC074806">
    <property type="protein sequence ID" value="AAH74806.1"/>
    <property type="molecule type" value="mRNA"/>
</dbReference>
<dbReference type="EMBL" id="X16176">
    <property type="protein sequence ID" value="CAA34298.1"/>
    <property type="molecule type" value="Genomic_DNA"/>
</dbReference>
<dbReference type="EMBL" id="X14571">
    <property type="protein sequence ID" value="CAA32709.1"/>
    <property type="molecule type" value="mRNA"/>
</dbReference>
<dbReference type="EMBL" id="X78978">
    <property type="protein sequence ID" value="CAA55581.1"/>
    <property type="molecule type" value="Genomic_DNA"/>
</dbReference>
<dbReference type="CCDS" id="CCDS11527.1"/>
<dbReference type="PIR" id="S07542">
    <property type="entry name" value="WJHU2H"/>
</dbReference>
<dbReference type="RefSeq" id="NP_002136.1">
    <property type="nucleotide sequence ID" value="NM_002145.4"/>
</dbReference>
<dbReference type="SMR" id="P14652"/>
<dbReference type="BioGRID" id="109452">
    <property type="interactions" value="36"/>
</dbReference>
<dbReference type="ELM" id="P14652"/>
<dbReference type="FunCoup" id="P14652">
    <property type="interactions" value="1116"/>
</dbReference>
<dbReference type="IntAct" id="P14652">
    <property type="interactions" value="30"/>
</dbReference>
<dbReference type="STRING" id="9606.ENSP00000331741"/>
<dbReference type="iPTMnet" id="P14652"/>
<dbReference type="PhosphoSitePlus" id="P14652"/>
<dbReference type="BioMuta" id="HOXB2"/>
<dbReference type="DMDM" id="123270"/>
<dbReference type="MassIVE" id="P14652"/>
<dbReference type="PaxDb" id="9606-ENSP00000331741"/>
<dbReference type="PeptideAtlas" id="P14652"/>
<dbReference type="Antibodypedia" id="30263">
    <property type="antibodies" value="163 antibodies from 28 providers"/>
</dbReference>
<dbReference type="DNASU" id="3212"/>
<dbReference type="Ensembl" id="ENST00000330070.6">
    <property type="protein sequence ID" value="ENSP00000331741.4"/>
    <property type="gene ID" value="ENSG00000173917.11"/>
</dbReference>
<dbReference type="GeneID" id="3212"/>
<dbReference type="KEGG" id="hsa:3212"/>
<dbReference type="MANE-Select" id="ENST00000330070.6">
    <property type="protein sequence ID" value="ENSP00000331741.4"/>
    <property type="RefSeq nucleotide sequence ID" value="NM_002145.4"/>
    <property type="RefSeq protein sequence ID" value="NP_002136.1"/>
</dbReference>
<dbReference type="UCSC" id="uc002inm.5">
    <property type="organism name" value="human"/>
</dbReference>
<dbReference type="AGR" id="HGNC:5113"/>
<dbReference type="CTD" id="3212"/>
<dbReference type="DisGeNET" id="3212"/>
<dbReference type="GeneCards" id="HOXB2"/>
<dbReference type="HGNC" id="HGNC:5113">
    <property type="gene designation" value="HOXB2"/>
</dbReference>
<dbReference type="HPA" id="ENSG00000173917">
    <property type="expression patterns" value="Low tissue specificity"/>
</dbReference>
<dbReference type="MIM" id="142967">
    <property type="type" value="gene"/>
</dbReference>
<dbReference type="neXtProt" id="NX_P14652"/>
<dbReference type="OpenTargets" id="ENSG00000173917"/>
<dbReference type="PharmGKB" id="PA29389"/>
<dbReference type="VEuPathDB" id="HostDB:ENSG00000173917"/>
<dbReference type="eggNOG" id="KOG0489">
    <property type="taxonomic scope" value="Eukaryota"/>
</dbReference>
<dbReference type="GeneTree" id="ENSGT00940000155029"/>
<dbReference type="HOGENOM" id="CLU_048378_0_0_1"/>
<dbReference type="InParanoid" id="P14652"/>
<dbReference type="OMA" id="DLPHFNF"/>
<dbReference type="OrthoDB" id="6159439at2759"/>
<dbReference type="PAN-GO" id="P14652">
    <property type="GO annotations" value="4 GO annotations based on evolutionary models"/>
</dbReference>
<dbReference type="PhylomeDB" id="P14652"/>
<dbReference type="TreeFam" id="TF317730"/>
<dbReference type="PathwayCommons" id="P14652"/>
<dbReference type="Reactome" id="R-HSA-5617472">
    <property type="pathway name" value="Activation of anterior HOX genes in hindbrain development during early embryogenesis"/>
</dbReference>
<dbReference type="SignaLink" id="P14652"/>
<dbReference type="SIGNOR" id="P14652"/>
<dbReference type="BioGRID-ORCS" id="3212">
    <property type="hits" value="8 hits in 1176 CRISPR screens"/>
</dbReference>
<dbReference type="ChiTaRS" id="HOXB2">
    <property type="organism name" value="human"/>
</dbReference>
<dbReference type="GeneWiki" id="HOXB2"/>
<dbReference type="GenomeRNAi" id="3212"/>
<dbReference type="Pharos" id="P14652">
    <property type="development level" value="Tbio"/>
</dbReference>
<dbReference type="PRO" id="PR:P14652"/>
<dbReference type="Proteomes" id="UP000005640">
    <property type="component" value="Chromosome 17"/>
</dbReference>
<dbReference type="RNAct" id="P14652">
    <property type="molecule type" value="protein"/>
</dbReference>
<dbReference type="Bgee" id="ENSG00000173917">
    <property type="expression patterns" value="Expressed in seminal vesicle and 151 other cell types or tissues"/>
</dbReference>
<dbReference type="GO" id="GO:0000785">
    <property type="term" value="C:chromatin"/>
    <property type="evidence" value="ECO:0000247"/>
    <property type="project" value="NTNU_SB"/>
</dbReference>
<dbReference type="GO" id="GO:0005654">
    <property type="term" value="C:nucleoplasm"/>
    <property type="evidence" value="ECO:0000314"/>
    <property type="project" value="HPA"/>
</dbReference>
<dbReference type="GO" id="GO:0005634">
    <property type="term" value="C:nucleus"/>
    <property type="evidence" value="ECO:0000318"/>
    <property type="project" value="GO_Central"/>
</dbReference>
<dbReference type="GO" id="GO:0001228">
    <property type="term" value="F:DNA-binding transcription activator activity, RNA polymerase II-specific"/>
    <property type="evidence" value="ECO:0000314"/>
    <property type="project" value="NTNU_SB"/>
</dbReference>
<dbReference type="GO" id="GO:0000981">
    <property type="term" value="F:DNA-binding transcription factor activity, RNA polymerase II-specific"/>
    <property type="evidence" value="ECO:0000247"/>
    <property type="project" value="NTNU_SB"/>
</dbReference>
<dbReference type="GO" id="GO:0000978">
    <property type="term" value="F:RNA polymerase II cis-regulatory region sequence-specific DNA binding"/>
    <property type="evidence" value="ECO:0000318"/>
    <property type="project" value="GO_Central"/>
</dbReference>
<dbReference type="GO" id="GO:0043565">
    <property type="term" value="F:sequence-specific DNA binding"/>
    <property type="evidence" value="ECO:0000314"/>
    <property type="project" value="NTNU_SB"/>
</dbReference>
<dbReference type="GO" id="GO:1990837">
    <property type="term" value="F:sequence-specific double-stranded DNA binding"/>
    <property type="evidence" value="ECO:0000314"/>
    <property type="project" value="ARUK-UCL"/>
</dbReference>
<dbReference type="GO" id="GO:0009952">
    <property type="term" value="P:anterior/posterior pattern specification"/>
    <property type="evidence" value="ECO:0007669"/>
    <property type="project" value="Ensembl"/>
</dbReference>
<dbReference type="GO" id="GO:0009953">
    <property type="term" value="P:dorsal/ventral pattern formation"/>
    <property type="evidence" value="ECO:0007669"/>
    <property type="project" value="Ensembl"/>
</dbReference>
<dbReference type="GO" id="GO:0048704">
    <property type="term" value="P:embryonic skeletal system morphogenesis"/>
    <property type="evidence" value="ECO:0007669"/>
    <property type="project" value="Ensembl"/>
</dbReference>
<dbReference type="GO" id="GO:0021612">
    <property type="term" value="P:facial nerve structural organization"/>
    <property type="evidence" value="ECO:0007669"/>
    <property type="project" value="Ensembl"/>
</dbReference>
<dbReference type="GO" id="GO:0002011">
    <property type="term" value="P:morphogenesis of an epithelial sheet"/>
    <property type="evidence" value="ECO:0007669"/>
    <property type="project" value="Ensembl"/>
</dbReference>
<dbReference type="GO" id="GO:0007399">
    <property type="term" value="P:nervous system development"/>
    <property type="evidence" value="ECO:0000303"/>
    <property type="project" value="UniProtKB"/>
</dbReference>
<dbReference type="GO" id="GO:0048857">
    <property type="term" value="P:neural nucleus development"/>
    <property type="evidence" value="ECO:0007669"/>
    <property type="project" value="Ensembl"/>
</dbReference>
<dbReference type="GO" id="GO:0045944">
    <property type="term" value="P:positive regulation of transcription by RNA polymerase II"/>
    <property type="evidence" value="ECO:0000314"/>
    <property type="project" value="NTNU_SB"/>
</dbReference>
<dbReference type="GO" id="GO:0006357">
    <property type="term" value="P:regulation of transcription by RNA polymerase II"/>
    <property type="evidence" value="ECO:0000318"/>
    <property type="project" value="GO_Central"/>
</dbReference>
<dbReference type="GO" id="GO:0021569">
    <property type="term" value="P:rhombomere 3 development"/>
    <property type="evidence" value="ECO:0007669"/>
    <property type="project" value="Ensembl"/>
</dbReference>
<dbReference type="GO" id="GO:0021570">
    <property type="term" value="P:rhombomere 4 development"/>
    <property type="evidence" value="ECO:0007669"/>
    <property type="project" value="Ensembl"/>
</dbReference>
<dbReference type="CDD" id="cd00086">
    <property type="entry name" value="homeodomain"/>
    <property type="match status" value="1"/>
</dbReference>
<dbReference type="FunFam" id="1.10.10.60:FF:000145">
    <property type="entry name" value="homeobox protein Hox-A2"/>
    <property type="match status" value="1"/>
</dbReference>
<dbReference type="Gene3D" id="1.10.10.60">
    <property type="entry name" value="Homeodomain-like"/>
    <property type="match status" value="1"/>
</dbReference>
<dbReference type="InterPro" id="IPR001356">
    <property type="entry name" value="HD"/>
</dbReference>
<dbReference type="InterPro" id="IPR020479">
    <property type="entry name" value="HD_metazoa"/>
</dbReference>
<dbReference type="InterPro" id="IPR001827">
    <property type="entry name" value="Homeobox_Antennapedia_CS"/>
</dbReference>
<dbReference type="InterPro" id="IPR017970">
    <property type="entry name" value="Homeobox_CS"/>
</dbReference>
<dbReference type="InterPro" id="IPR009057">
    <property type="entry name" value="Homeodomain-like_sf"/>
</dbReference>
<dbReference type="PANTHER" id="PTHR45664:SF7">
    <property type="entry name" value="HOMEOBOX PROTEIN HOX-B2"/>
    <property type="match status" value="1"/>
</dbReference>
<dbReference type="PANTHER" id="PTHR45664">
    <property type="entry name" value="PROTEIN ZERKNUELLT 1-RELATED"/>
    <property type="match status" value="1"/>
</dbReference>
<dbReference type="Pfam" id="PF00046">
    <property type="entry name" value="Homeodomain"/>
    <property type="match status" value="1"/>
</dbReference>
<dbReference type="PRINTS" id="PR00024">
    <property type="entry name" value="HOMEOBOX"/>
</dbReference>
<dbReference type="SMART" id="SM00389">
    <property type="entry name" value="HOX"/>
    <property type="match status" value="1"/>
</dbReference>
<dbReference type="SUPFAM" id="SSF46689">
    <property type="entry name" value="Homeodomain-like"/>
    <property type="match status" value="1"/>
</dbReference>
<dbReference type="PROSITE" id="PS00032">
    <property type="entry name" value="ANTENNAPEDIA"/>
    <property type="match status" value="1"/>
</dbReference>
<dbReference type="PROSITE" id="PS00027">
    <property type="entry name" value="HOMEOBOX_1"/>
    <property type="match status" value="1"/>
</dbReference>
<dbReference type="PROSITE" id="PS50071">
    <property type="entry name" value="HOMEOBOX_2"/>
    <property type="match status" value="1"/>
</dbReference>
<accession>P14652</accession>
<accession>P10913</accession>
<accession>P17485</accession>
<evidence type="ECO:0000255" key="1">
    <source>
        <dbReference type="PROSITE-ProRule" id="PRU00108"/>
    </source>
</evidence>
<evidence type="ECO:0000256" key="2">
    <source>
        <dbReference type="SAM" id="MobiDB-lite"/>
    </source>
</evidence>
<evidence type="ECO:0000269" key="3">
    <source>
    </source>
</evidence>
<evidence type="ECO:0000305" key="4"/>
<evidence type="ECO:0007744" key="5">
    <source>
    </source>
</evidence>
<proteinExistence type="evidence at protein level"/>
<gene>
    <name type="primary">HOXB2</name>
    <name type="synonym">HOX2H</name>
</gene>